<accession>Q5SLN5</accession>
<gene>
    <name evidence="1" type="primary">mnmA</name>
    <name type="ordered locus">TTHA0258</name>
</gene>
<proteinExistence type="inferred from homology"/>
<feature type="chain" id="PRO_0000349847" description="tRNA-specific 2-thiouridylase MnmA">
    <location>
        <begin position="1"/>
        <end position="367"/>
    </location>
</feature>
<feature type="region of interest" description="Interaction with tRNA" evidence="1">
    <location>
        <begin position="150"/>
        <end position="152"/>
    </location>
</feature>
<feature type="region of interest" description="Interaction with tRNA" evidence="1">
    <location>
        <begin position="301"/>
        <end position="302"/>
    </location>
</feature>
<feature type="active site" description="Nucleophile" evidence="1">
    <location>
        <position position="108"/>
    </location>
</feature>
<feature type="active site" description="Cysteine persulfide intermediate" evidence="1">
    <location>
        <position position="200"/>
    </location>
</feature>
<feature type="binding site" evidence="1">
    <location>
        <begin position="7"/>
        <end position="14"/>
    </location>
    <ligand>
        <name>ATP</name>
        <dbReference type="ChEBI" id="CHEBI:30616"/>
    </ligand>
</feature>
<feature type="binding site" evidence="1">
    <location>
        <position position="33"/>
    </location>
    <ligand>
        <name>ATP</name>
        <dbReference type="ChEBI" id="CHEBI:30616"/>
    </ligand>
</feature>
<feature type="binding site" evidence="1">
    <location>
        <position position="132"/>
    </location>
    <ligand>
        <name>ATP</name>
        <dbReference type="ChEBI" id="CHEBI:30616"/>
    </ligand>
</feature>
<feature type="site" description="Interaction with tRNA" evidence="1">
    <location>
        <position position="133"/>
    </location>
</feature>
<feature type="site" description="Interaction with tRNA" evidence="1">
    <location>
        <position position="332"/>
    </location>
</feature>
<feature type="disulfide bond" description="Alternate" evidence="1">
    <location>
        <begin position="108"/>
        <end position="200"/>
    </location>
</feature>
<evidence type="ECO:0000255" key="1">
    <source>
        <dbReference type="HAMAP-Rule" id="MF_00144"/>
    </source>
</evidence>
<keyword id="KW-0067">ATP-binding</keyword>
<keyword id="KW-0963">Cytoplasm</keyword>
<keyword id="KW-1015">Disulfide bond</keyword>
<keyword id="KW-0547">Nucleotide-binding</keyword>
<keyword id="KW-1185">Reference proteome</keyword>
<keyword id="KW-0694">RNA-binding</keyword>
<keyword id="KW-0808">Transferase</keyword>
<keyword id="KW-0819">tRNA processing</keyword>
<keyword id="KW-0820">tRNA-binding</keyword>
<sequence length="367" mass="40621">MKRVLVAMSGGVDSSVAALLLKEAGYEVVGAMMRFWPDLPPPSLEAGKPRAWESCCTPDAAYEARRVADRLGIPFYLLDYREVFEEEIISPFLQDYAQGRTPNPCARCNTFVKFGALLKQARRLGLDYVATGHYVRKEGLALLRGLDPHKDQTYFLWGTPKEALPHLLFPVGGLTKPEVRALAEKAGLPTARRPESQNLCFVAGDLKGFLKERLKPRPGPLVDALTGEVVGEHEGASLYTLGQRKGLGLYKTHLERYVVGVDPERNVVYVGPKEACYFEGLEGEGLNLLAELPEEVEVQVRYRTPPVRAKVESLSPLRLRFAHPVFAVTPGQSAVFYRGERLLGGAVIRRGLYNLAGLEDPRALTFS</sequence>
<organism>
    <name type="scientific">Thermus thermophilus (strain ATCC 27634 / DSM 579 / HB8)</name>
    <dbReference type="NCBI Taxonomy" id="300852"/>
    <lineage>
        <taxon>Bacteria</taxon>
        <taxon>Thermotogati</taxon>
        <taxon>Deinococcota</taxon>
        <taxon>Deinococci</taxon>
        <taxon>Thermales</taxon>
        <taxon>Thermaceae</taxon>
        <taxon>Thermus</taxon>
    </lineage>
</organism>
<protein>
    <recommendedName>
        <fullName evidence="1">tRNA-specific 2-thiouridylase MnmA</fullName>
        <ecNumber evidence="1">2.8.1.13</ecNumber>
    </recommendedName>
</protein>
<comment type="function">
    <text evidence="1">Catalyzes the 2-thiolation of uridine at the wobble position (U34) of tRNA, leading to the formation of s(2)U34.</text>
</comment>
<comment type="catalytic activity">
    <reaction evidence="1">
        <text>S-sulfanyl-L-cysteinyl-[protein] + uridine(34) in tRNA + AH2 + ATP = 2-thiouridine(34) in tRNA + L-cysteinyl-[protein] + A + AMP + diphosphate + H(+)</text>
        <dbReference type="Rhea" id="RHEA:47032"/>
        <dbReference type="Rhea" id="RHEA-COMP:10131"/>
        <dbReference type="Rhea" id="RHEA-COMP:11726"/>
        <dbReference type="Rhea" id="RHEA-COMP:11727"/>
        <dbReference type="Rhea" id="RHEA-COMP:11728"/>
        <dbReference type="ChEBI" id="CHEBI:13193"/>
        <dbReference type="ChEBI" id="CHEBI:15378"/>
        <dbReference type="ChEBI" id="CHEBI:17499"/>
        <dbReference type="ChEBI" id="CHEBI:29950"/>
        <dbReference type="ChEBI" id="CHEBI:30616"/>
        <dbReference type="ChEBI" id="CHEBI:33019"/>
        <dbReference type="ChEBI" id="CHEBI:61963"/>
        <dbReference type="ChEBI" id="CHEBI:65315"/>
        <dbReference type="ChEBI" id="CHEBI:87170"/>
        <dbReference type="ChEBI" id="CHEBI:456215"/>
        <dbReference type="EC" id="2.8.1.13"/>
    </reaction>
</comment>
<comment type="subcellular location">
    <subcellularLocation>
        <location evidence="1">Cytoplasm</location>
    </subcellularLocation>
</comment>
<comment type="similarity">
    <text evidence="1">Belongs to the MnmA/TRMU family.</text>
</comment>
<reference key="1">
    <citation type="submission" date="2004-11" db="EMBL/GenBank/DDBJ databases">
        <title>Complete genome sequence of Thermus thermophilus HB8.</title>
        <authorList>
            <person name="Masui R."/>
            <person name="Kurokawa K."/>
            <person name="Nakagawa N."/>
            <person name="Tokunaga F."/>
            <person name="Koyama Y."/>
            <person name="Shibata T."/>
            <person name="Oshima T."/>
            <person name="Yokoyama S."/>
            <person name="Yasunaga T."/>
            <person name="Kuramitsu S."/>
        </authorList>
    </citation>
    <scope>NUCLEOTIDE SEQUENCE [LARGE SCALE GENOMIC DNA]</scope>
    <source>
        <strain>ATCC 27634 / DSM 579 / HB8</strain>
    </source>
</reference>
<name>MNMA_THET8</name>
<dbReference type="EC" id="2.8.1.13" evidence="1"/>
<dbReference type="EMBL" id="AP008226">
    <property type="protein sequence ID" value="BAD70081.1"/>
    <property type="molecule type" value="Genomic_DNA"/>
</dbReference>
<dbReference type="RefSeq" id="WP_011174090.1">
    <property type="nucleotide sequence ID" value="NC_006461.1"/>
</dbReference>
<dbReference type="RefSeq" id="YP_143524.1">
    <property type="nucleotide sequence ID" value="NC_006461.1"/>
</dbReference>
<dbReference type="SMR" id="Q5SLN5"/>
<dbReference type="EnsemblBacteria" id="BAD70081">
    <property type="protein sequence ID" value="BAD70081"/>
    <property type="gene ID" value="BAD70081"/>
</dbReference>
<dbReference type="GeneID" id="3168732"/>
<dbReference type="KEGG" id="ttj:TTHA0258"/>
<dbReference type="PATRIC" id="fig|300852.9.peg.258"/>
<dbReference type="eggNOG" id="COG0482">
    <property type="taxonomic scope" value="Bacteria"/>
</dbReference>
<dbReference type="HOGENOM" id="CLU_035188_0_0_0"/>
<dbReference type="PhylomeDB" id="Q5SLN5"/>
<dbReference type="Proteomes" id="UP000000532">
    <property type="component" value="Chromosome"/>
</dbReference>
<dbReference type="GO" id="GO:0005737">
    <property type="term" value="C:cytoplasm"/>
    <property type="evidence" value="ECO:0007669"/>
    <property type="project" value="UniProtKB-SubCell"/>
</dbReference>
<dbReference type="GO" id="GO:0005524">
    <property type="term" value="F:ATP binding"/>
    <property type="evidence" value="ECO:0007669"/>
    <property type="project" value="UniProtKB-KW"/>
</dbReference>
<dbReference type="GO" id="GO:0000049">
    <property type="term" value="F:tRNA binding"/>
    <property type="evidence" value="ECO:0007669"/>
    <property type="project" value="UniProtKB-KW"/>
</dbReference>
<dbReference type="GO" id="GO:0103016">
    <property type="term" value="F:tRNA-uridine 2-sulfurtransferase activity"/>
    <property type="evidence" value="ECO:0007669"/>
    <property type="project" value="UniProtKB-EC"/>
</dbReference>
<dbReference type="GO" id="GO:0002143">
    <property type="term" value="P:tRNA wobble position uridine thiolation"/>
    <property type="evidence" value="ECO:0007669"/>
    <property type="project" value="TreeGrafter"/>
</dbReference>
<dbReference type="CDD" id="cd01998">
    <property type="entry name" value="MnmA_TRMU-like"/>
    <property type="match status" value="1"/>
</dbReference>
<dbReference type="FunFam" id="2.30.30.280:FF:000001">
    <property type="entry name" value="tRNA-specific 2-thiouridylase MnmA"/>
    <property type="match status" value="1"/>
</dbReference>
<dbReference type="FunFam" id="3.40.50.620:FF:000115">
    <property type="entry name" value="tRNA-specific 2-thiouridylase MnmA"/>
    <property type="match status" value="1"/>
</dbReference>
<dbReference type="Gene3D" id="2.30.30.280">
    <property type="entry name" value="Adenine nucleotide alpha hydrolases-like domains"/>
    <property type="match status" value="1"/>
</dbReference>
<dbReference type="Gene3D" id="3.40.50.620">
    <property type="entry name" value="HUPs"/>
    <property type="match status" value="1"/>
</dbReference>
<dbReference type="Gene3D" id="2.40.30.10">
    <property type="entry name" value="Translation factors"/>
    <property type="match status" value="1"/>
</dbReference>
<dbReference type="HAMAP" id="MF_00144">
    <property type="entry name" value="tRNA_thiouridyl_MnmA"/>
    <property type="match status" value="1"/>
</dbReference>
<dbReference type="InterPro" id="IPR004506">
    <property type="entry name" value="MnmA-like"/>
</dbReference>
<dbReference type="InterPro" id="IPR046885">
    <property type="entry name" value="MnmA-like_C"/>
</dbReference>
<dbReference type="InterPro" id="IPR046884">
    <property type="entry name" value="MnmA-like_central"/>
</dbReference>
<dbReference type="InterPro" id="IPR023382">
    <property type="entry name" value="MnmA-like_central_sf"/>
</dbReference>
<dbReference type="InterPro" id="IPR014729">
    <property type="entry name" value="Rossmann-like_a/b/a_fold"/>
</dbReference>
<dbReference type="NCBIfam" id="NF001138">
    <property type="entry name" value="PRK00143.1"/>
    <property type="match status" value="1"/>
</dbReference>
<dbReference type="NCBIfam" id="TIGR00420">
    <property type="entry name" value="trmU"/>
    <property type="match status" value="1"/>
</dbReference>
<dbReference type="PANTHER" id="PTHR11933:SF5">
    <property type="entry name" value="MITOCHONDRIAL TRNA-SPECIFIC 2-THIOURIDYLASE 1"/>
    <property type="match status" value="1"/>
</dbReference>
<dbReference type="PANTHER" id="PTHR11933">
    <property type="entry name" value="TRNA 5-METHYLAMINOMETHYL-2-THIOURIDYLATE -METHYLTRANSFERASE"/>
    <property type="match status" value="1"/>
</dbReference>
<dbReference type="Pfam" id="PF03054">
    <property type="entry name" value="tRNA_Me_trans"/>
    <property type="match status" value="1"/>
</dbReference>
<dbReference type="Pfam" id="PF20258">
    <property type="entry name" value="tRNA_Me_trans_C"/>
    <property type="match status" value="1"/>
</dbReference>
<dbReference type="Pfam" id="PF20259">
    <property type="entry name" value="tRNA_Me_trans_M"/>
    <property type="match status" value="1"/>
</dbReference>
<dbReference type="SUPFAM" id="SSF52402">
    <property type="entry name" value="Adenine nucleotide alpha hydrolases-like"/>
    <property type="match status" value="1"/>
</dbReference>